<reference key="1">
    <citation type="journal article" date="2008" name="ISME J.">
        <title>Comparative genomics of two ecotypes of the marine planktonic copiotroph Alteromonas macleodii suggests alternative lifestyles associated with different kinds of particulate organic matter.</title>
        <authorList>
            <person name="Ivars-Martinez E."/>
            <person name="Martin-Cuadrado A.-B."/>
            <person name="D'Auria G."/>
            <person name="Mira A."/>
            <person name="Ferriera S."/>
            <person name="Johnson J."/>
            <person name="Friedman R."/>
            <person name="Rodriguez-Valera F."/>
        </authorList>
    </citation>
    <scope>NUCLEOTIDE SEQUENCE [LARGE SCALE GENOMIC DNA]</scope>
    <source>
        <strain>DSM 17117 / CIP 110805 / LMG 28347 / Deep ecotype</strain>
    </source>
</reference>
<accession>B4RV80</accession>
<accession>F2G264</accession>
<protein>
    <recommendedName>
        <fullName evidence="1">GMP synthase [glutamine-hydrolyzing]</fullName>
        <ecNumber evidence="1">6.3.5.2</ecNumber>
    </recommendedName>
    <alternativeName>
        <fullName evidence="1">GMP synthetase</fullName>
    </alternativeName>
    <alternativeName>
        <fullName evidence="1">Glutamine amidotransferase</fullName>
    </alternativeName>
</protein>
<evidence type="ECO:0000255" key="1">
    <source>
        <dbReference type="HAMAP-Rule" id="MF_00344"/>
    </source>
</evidence>
<sequence>MTTNIHDQRILILDFGSQYTQLIARRVREIGVYCELWAWDVTEEQIREFNPQGIILSGGPESVTEEGSPRAPDYVFEAGVPVLGVCYGMQTMAHQLGGGVLGSDKREFGYAQVEVIKPSPLLDKIEDAIGDNGAALLDVWMSHGDKVAAIPEGFETIAQTASCPHAAMYNEEKQFYGVQFHPEVTHTRQGMRLLTQFVMDICKCEKLWTAGAIIEDAIERIKEKVGDERVILGLSGGVDSSVTAMLLHRAIGKNLTCVFVDNGLLRLNEADQVMEMFGDHFGLNIIRVDAEGRFLDRLKGIEDPELKRKAIGNEFVRVFDEEASKLENAKWLAQGTIYPDVIESAGSATGKAHVIKSHHNVGGLPEDMELGLVEPLRELFKDEVRKIGLELGLPYDMLYRHPFPGPGLGVRVLGEIKKEYCDLLRRADAIFIEELYAADLYQKVSQAFTVFLPVRSVGVMGDARKYDWVVSLRAVETIDFMTAHWAHLPYDFLGKVSNRIINEIDGISRVVYDISGKPPATIEWE</sequence>
<dbReference type="EC" id="6.3.5.2" evidence="1"/>
<dbReference type="EMBL" id="CP001103">
    <property type="protein sequence ID" value="AEA97198.1"/>
    <property type="molecule type" value="Genomic_DNA"/>
</dbReference>
<dbReference type="RefSeq" id="WP_012517552.1">
    <property type="nucleotide sequence ID" value="NC_011138.3"/>
</dbReference>
<dbReference type="SMR" id="B4RV80"/>
<dbReference type="GeneID" id="56343077"/>
<dbReference type="KEGG" id="amc:MADE_1005260"/>
<dbReference type="HOGENOM" id="CLU_014340_0_5_6"/>
<dbReference type="UniPathway" id="UPA00189">
    <property type="reaction ID" value="UER00296"/>
</dbReference>
<dbReference type="Proteomes" id="UP000001870">
    <property type="component" value="Chromosome"/>
</dbReference>
<dbReference type="GO" id="GO:0005829">
    <property type="term" value="C:cytosol"/>
    <property type="evidence" value="ECO:0007669"/>
    <property type="project" value="TreeGrafter"/>
</dbReference>
<dbReference type="GO" id="GO:0005524">
    <property type="term" value="F:ATP binding"/>
    <property type="evidence" value="ECO:0007669"/>
    <property type="project" value="UniProtKB-UniRule"/>
</dbReference>
<dbReference type="GO" id="GO:0003921">
    <property type="term" value="F:GMP synthase activity"/>
    <property type="evidence" value="ECO:0007669"/>
    <property type="project" value="InterPro"/>
</dbReference>
<dbReference type="CDD" id="cd01742">
    <property type="entry name" value="GATase1_GMP_Synthase"/>
    <property type="match status" value="1"/>
</dbReference>
<dbReference type="CDD" id="cd01997">
    <property type="entry name" value="GMP_synthase_C"/>
    <property type="match status" value="1"/>
</dbReference>
<dbReference type="FunFam" id="3.30.300.10:FF:000002">
    <property type="entry name" value="GMP synthase [glutamine-hydrolyzing]"/>
    <property type="match status" value="1"/>
</dbReference>
<dbReference type="FunFam" id="3.40.50.620:FF:000001">
    <property type="entry name" value="GMP synthase [glutamine-hydrolyzing]"/>
    <property type="match status" value="1"/>
</dbReference>
<dbReference type="FunFam" id="3.40.50.880:FF:000001">
    <property type="entry name" value="GMP synthase [glutamine-hydrolyzing]"/>
    <property type="match status" value="1"/>
</dbReference>
<dbReference type="Gene3D" id="3.30.300.10">
    <property type="match status" value="1"/>
</dbReference>
<dbReference type="Gene3D" id="3.40.50.880">
    <property type="match status" value="1"/>
</dbReference>
<dbReference type="Gene3D" id="3.40.50.620">
    <property type="entry name" value="HUPs"/>
    <property type="match status" value="1"/>
</dbReference>
<dbReference type="HAMAP" id="MF_00344">
    <property type="entry name" value="GMP_synthase"/>
    <property type="match status" value="1"/>
</dbReference>
<dbReference type="InterPro" id="IPR029062">
    <property type="entry name" value="Class_I_gatase-like"/>
</dbReference>
<dbReference type="InterPro" id="IPR017926">
    <property type="entry name" value="GATASE"/>
</dbReference>
<dbReference type="InterPro" id="IPR001674">
    <property type="entry name" value="GMP_synth_C"/>
</dbReference>
<dbReference type="InterPro" id="IPR004739">
    <property type="entry name" value="GMP_synth_GATase"/>
</dbReference>
<dbReference type="InterPro" id="IPR022955">
    <property type="entry name" value="GMP_synthase"/>
</dbReference>
<dbReference type="InterPro" id="IPR025777">
    <property type="entry name" value="GMPS_ATP_PPase_dom"/>
</dbReference>
<dbReference type="InterPro" id="IPR022310">
    <property type="entry name" value="NAD/GMP_synthase"/>
</dbReference>
<dbReference type="InterPro" id="IPR014729">
    <property type="entry name" value="Rossmann-like_a/b/a_fold"/>
</dbReference>
<dbReference type="NCBIfam" id="TIGR00884">
    <property type="entry name" value="guaA_Cterm"/>
    <property type="match status" value="1"/>
</dbReference>
<dbReference type="NCBIfam" id="TIGR00888">
    <property type="entry name" value="guaA_Nterm"/>
    <property type="match status" value="1"/>
</dbReference>
<dbReference type="NCBIfam" id="NF000848">
    <property type="entry name" value="PRK00074.1"/>
    <property type="match status" value="1"/>
</dbReference>
<dbReference type="PANTHER" id="PTHR11922:SF2">
    <property type="entry name" value="GMP SYNTHASE [GLUTAMINE-HYDROLYZING]"/>
    <property type="match status" value="1"/>
</dbReference>
<dbReference type="PANTHER" id="PTHR11922">
    <property type="entry name" value="GMP SYNTHASE-RELATED"/>
    <property type="match status" value="1"/>
</dbReference>
<dbReference type="Pfam" id="PF00117">
    <property type="entry name" value="GATase"/>
    <property type="match status" value="1"/>
</dbReference>
<dbReference type="Pfam" id="PF00958">
    <property type="entry name" value="GMP_synt_C"/>
    <property type="match status" value="1"/>
</dbReference>
<dbReference type="Pfam" id="PF02540">
    <property type="entry name" value="NAD_synthase"/>
    <property type="match status" value="1"/>
</dbReference>
<dbReference type="PRINTS" id="PR00097">
    <property type="entry name" value="ANTSNTHASEII"/>
</dbReference>
<dbReference type="PRINTS" id="PR00099">
    <property type="entry name" value="CPSGATASE"/>
</dbReference>
<dbReference type="PRINTS" id="PR00096">
    <property type="entry name" value="GATASE"/>
</dbReference>
<dbReference type="SUPFAM" id="SSF52402">
    <property type="entry name" value="Adenine nucleotide alpha hydrolases-like"/>
    <property type="match status" value="1"/>
</dbReference>
<dbReference type="SUPFAM" id="SSF52317">
    <property type="entry name" value="Class I glutamine amidotransferase-like"/>
    <property type="match status" value="1"/>
</dbReference>
<dbReference type="SUPFAM" id="SSF54810">
    <property type="entry name" value="GMP synthetase C-terminal dimerisation domain"/>
    <property type="match status" value="1"/>
</dbReference>
<dbReference type="PROSITE" id="PS51273">
    <property type="entry name" value="GATASE_TYPE_1"/>
    <property type="match status" value="1"/>
</dbReference>
<dbReference type="PROSITE" id="PS51553">
    <property type="entry name" value="GMPS_ATP_PPASE"/>
    <property type="match status" value="1"/>
</dbReference>
<proteinExistence type="inferred from homology"/>
<comment type="function">
    <text evidence="1">Catalyzes the synthesis of GMP from XMP.</text>
</comment>
<comment type="catalytic activity">
    <reaction evidence="1">
        <text>XMP + L-glutamine + ATP + H2O = GMP + L-glutamate + AMP + diphosphate + 2 H(+)</text>
        <dbReference type="Rhea" id="RHEA:11680"/>
        <dbReference type="ChEBI" id="CHEBI:15377"/>
        <dbReference type="ChEBI" id="CHEBI:15378"/>
        <dbReference type="ChEBI" id="CHEBI:29985"/>
        <dbReference type="ChEBI" id="CHEBI:30616"/>
        <dbReference type="ChEBI" id="CHEBI:33019"/>
        <dbReference type="ChEBI" id="CHEBI:57464"/>
        <dbReference type="ChEBI" id="CHEBI:58115"/>
        <dbReference type="ChEBI" id="CHEBI:58359"/>
        <dbReference type="ChEBI" id="CHEBI:456215"/>
        <dbReference type="EC" id="6.3.5.2"/>
    </reaction>
</comment>
<comment type="pathway">
    <text evidence="1">Purine metabolism; GMP biosynthesis; GMP from XMP (L-Gln route): step 1/1.</text>
</comment>
<comment type="subunit">
    <text evidence="1">Homodimer.</text>
</comment>
<name>GUAA_ALTMD</name>
<keyword id="KW-0067">ATP-binding</keyword>
<keyword id="KW-0315">Glutamine amidotransferase</keyword>
<keyword id="KW-0332">GMP biosynthesis</keyword>
<keyword id="KW-0436">Ligase</keyword>
<keyword id="KW-0547">Nucleotide-binding</keyword>
<keyword id="KW-0658">Purine biosynthesis</keyword>
<gene>
    <name evidence="1" type="primary">guaA</name>
    <name type="ordered locus">MADE_1005260</name>
</gene>
<organism>
    <name type="scientific">Alteromonas mediterranea (strain DSM 17117 / CIP 110805 / LMG 28347 / Deep ecotype)</name>
    <dbReference type="NCBI Taxonomy" id="1774373"/>
    <lineage>
        <taxon>Bacteria</taxon>
        <taxon>Pseudomonadati</taxon>
        <taxon>Pseudomonadota</taxon>
        <taxon>Gammaproteobacteria</taxon>
        <taxon>Alteromonadales</taxon>
        <taxon>Alteromonadaceae</taxon>
        <taxon>Alteromonas/Salinimonas group</taxon>
        <taxon>Alteromonas</taxon>
    </lineage>
</organism>
<feature type="chain" id="PRO_1000120208" description="GMP synthase [glutamine-hydrolyzing]">
    <location>
        <begin position="1"/>
        <end position="525"/>
    </location>
</feature>
<feature type="domain" description="Glutamine amidotransferase type-1" evidence="1">
    <location>
        <begin position="9"/>
        <end position="207"/>
    </location>
</feature>
<feature type="domain" description="GMPS ATP-PPase" evidence="1">
    <location>
        <begin position="208"/>
        <end position="400"/>
    </location>
</feature>
<feature type="active site" description="Nucleophile" evidence="1">
    <location>
        <position position="86"/>
    </location>
</feature>
<feature type="active site" evidence="1">
    <location>
        <position position="181"/>
    </location>
</feature>
<feature type="active site" evidence="1">
    <location>
        <position position="183"/>
    </location>
</feature>
<feature type="binding site" evidence="1">
    <location>
        <begin position="235"/>
        <end position="241"/>
    </location>
    <ligand>
        <name>ATP</name>
        <dbReference type="ChEBI" id="CHEBI:30616"/>
    </ligand>
</feature>